<accession>A2CCP7</accession>
<protein>
    <recommendedName>
        <fullName evidence="1">NAD(P)H-quinone oxidoreductase subunit 3</fullName>
        <ecNumber evidence="1">7.1.1.-</ecNumber>
    </recommendedName>
    <alternativeName>
        <fullName evidence="1">NAD(P)H dehydrogenase subunit 3</fullName>
    </alternativeName>
    <alternativeName>
        <fullName evidence="1">NADH-plastoquinone oxidoreductase subunit 3</fullName>
    </alternativeName>
    <alternativeName>
        <fullName evidence="1">NDH-1 subunit 3</fullName>
        <shortName evidence="1">NDH-C</shortName>
    </alternativeName>
</protein>
<proteinExistence type="inferred from homology"/>
<name>NU3C_PROM3</name>
<keyword id="KW-0472">Membrane</keyword>
<keyword id="KW-0520">NAD</keyword>
<keyword id="KW-0521">NADP</keyword>
<keyword id="KW-0618">Plastoquinone</keyword>
<keyword id="KW-0874">Quinone</keyword>
<keyword id="KW-0793">Thylakoid</keyword>
<keyword id="KW-1278">Translocase</keyword>
<keyword id="KW-0812">Transmembrane</keyword>
<keyword id="KW-1133">Transmembrane helix</keyword>
<keyword id="KW-0813">Transport</keyword>
<organism>
    <name type="scientific">Prochlorococcus marinus (strain MIT 9303)</name>
    <dbReference type="NCBI Taxonomy" id="59922"/>
    <lineage>
        <taxon>Bacteria</taxon>
        <taxon>Bacillati</taxon>
        <taxon>Cyanobacteriota</taxon>
        <taxon>Cyanophyceae</taxon>
        <taxon>Synechococcales</taxon>
        <taxon>Prochlorococcaceae</taxon>
        <taxon>Prochlorococcus</taxon>
    </lineage>
</organism>
<gene>
    <name evidence="1" type="primary">ndhC</name>
    <name type="ordered locus">P9303_25261</name>
</gene>
<comment type="function">
    <text evidence="1">NDH-1 shuttles electrons from an unknown electron donor, via FMN and iron-sulfur (Fe-S) centers, to quinones in the respiratory and/or the photosynthetic chain. The immediate electron acceptor for the enzyme in this species is believed to be plastoquinone. Couples the redox reaction to proton translocation, and thus conserves the redox energy in a proton gradient. Cyanobacterial NDH-1 also plays a role in inorganic carbon-concentration.</text>
</comment>
<comment type="catalytic activity">
    <reaction evidence="1">
        <text>a plastoquinone + NADH + (n+1) H(+)(in) = a plastoquinol + NAD(+) + n H(+)(out)</text>
        <dbReference type="Rhea" id="RHEA:42608"/>
        <dbReference type="Rhea" id="RHEA-COMP:9561"/>
        <dbReference type="Rhea" id="RHEA-COMP:9562"/>
        <dbReference type="ChEBI" id="CHEBI:15378"/>
        <dbReference type="ChEBI" id="CHEBI:17757"/>
        <dbReference type="ChEBI" id="CHEBI:57540"/>
        <dbReference type="ChEBI" id="CHEBI:57945"/>
        <dbReference type="ChEBI" id="CHEBI:62192"/>
    </reaction>
</comment>
<comment type="catalytic activity">
    <reaction evidence="1">
        <text>a plastoquinone + NADPH + (n+1) H(+)(in) = a plastoquinol + NADP(+) + n H(+)(out)</text>
        <dbReference type="Rhea" id="RHEA:42612"/>
        <dbReference type="Rhea" id="RHEA-COMP:9561"/>
        <dbReference type="Rhea" id="RHEA-COMP:9562"/>
        <dbReference type="ChEBI" id="CHEBI:15378"/>
        <dbReference type="ChEBI" id="CHEBI:17757"/>
        <dbReference type="ChEBI" id="CHEBI:57783"/>
        <dbReference type="ChEBI" id="CHEBI:58349"/>
        <dbReference type="ChEBI" id="CHEBI:62192"/>
    </reaction>
</comment>
<comment type="subunit">
    <text evidence="1">NDH-1 can be composed of about 15 different subunits; different subcomplexes with different compositions have been identified which probably have different functions.</text>
</comment>
<comment type="subcellular location">
    <subcellularLocation>
        <location evidence="1">Cellular thylakoid membrane</location>
        <topology evidence="1">Multi-pass membrane protein</topology>
    </subcellularLocation>
</comment>
<comment type="similarity">
    <text evidence="1">Belongs to the complex I subunit 3 family.</text>
</comment>
<feature type="chain" id="PRO_0000362723" description="NAD(P)H-quinone oxidoreductase subunit 3">
    <location>
        <begin position="1"/>
        <end position="134"/>
    </location>
</feature>
<feature type="transmembrane region" description="Helical" evidence="1">
    <location>
        <begin position="20"/>
        <end position="40"/>
    </location>
</feature>
<feature type="transmembrane region" description="Helical" evidence="1">
    <location>
        <begin position="78"/>
        <end position="98"/>
    </location>
</feature>
<feature type="transmembrane region" description="Helical" evidence="1">
    <location>
        <begin position="103"/>
        <end position="123"/>
    </location>
</feature>
<reference key="1">
    <citation type="journal article" date="2007" name="PLoS Genet.">
        <title>Patterns and implications of gene gain and loss in the evolution of Prochlorococcus.</title>
        <authorList>
            <person name="Kettler G.C."/>
            <person name="Martiny A.C."/>
            <person name="Huang K."/>
            <person name="Zucker J."/>
            <person name="Coleman M.L."/>
            <person name="Rodrigue S."/>
            <person name="Chen F."/>
            <person name="Lapidus A."/>
            <person name="Ferriera S."/>
            <person name="Johnson J."/>
            <person name="Steglich C."/>
            <person name="Church G.M."/>
            <person name="Richardson P."/>
            <person name="Chisholm S.W."/>
        </authorList>
    </citation>
    <scope>NUCLEOTIDE SEQUENCE [LARGE SCALE GENOMIC DNA]</scope>
    <source>
        <strain>MIT 9303</strain>
    </source>
</reference>
<sequence length="134" mass="15074">MAVNARLISKSYLSMFALPGYDAFLGFLLVSAAVPILALVTNKLLAPRSRTGERELTYESGMEPIGGAWIQFNIRYYMFALVFVIFDVETVFLYPWAVAFHRLGLLAFIEALIFIAILLVALAYAWRKGALEWS</sequence>
<evidence type="ECO:0000255" key="1">
    <source>
        <dbReference type="HAMAP-Rule" id="MF_01394"/>
    </source>
</evidence>
<dbReference type="EC" id="7.1.1.-" evidence="1"/>
<dbReference type="EMBL" id="CP000554">
    <property type="protein sequence ID" value="ABM79257.1"/>
    <property type="molecule type" value="Genomic_DNA"/>
</dbReference>
<dbReference type="SMR" id="A2CCP7"/>
<dbReference type="STRING" id="59922.P9303_25261"/>
<dbReference type="KEGG" id="pmf:P9303_25261"/>
<dbReference type="HOGENOM" id="CLU_119549_1_1_3"/>
<dbReference type="Proteomes" id="UP000002274">
    <property type="component" value="Chromosome"/>
</dbReference>
<dbReference type="GO" id="GO:0030964">
    <property type="term" value="C:NADH dehydrogenase complex"/>
    <property type="evidence" value="ECO:0007669"/>
    <property type="project" value="TreeGrafter"/>
</dbReference>
<dbReference type="GO" id="GO:0031676">
    <property type="term" value="C:plasma membrane-derived thylakoid membrane"/>
    <property type="evidence" value="ECO:0007669"/>
    <property type="project" value="UniProtKB-SubCell"/>
</dbReference>
<dbReference type="GO" id="GO:0008137">
    <property type="term" value="F:NADH dehydrogenase (ubiquinone) activity"/>
    <property type="evidence" value="ECO:0007669"/>
    <property type="project" value="InterPro"/>
</dbReference>
<dbReference type="GO" id="GO:0048038">
    <property type="term" value="F:quinone binding"/>
    <property type="evidence" value="ECO:0007669"/>
    <property type="project" value="UniProtKB-KW"/>
</dbReference>
<dbReference type="GO" id="GO:0019684">
    <property type="term" value="P:photosynthesis, light reaction"/>
    <property type="evidence" value="ECO:0007669"/>
    <property type="project" value="UniProtKB-UniRule"/>
</dbReference>
<dbReference type="Gene3D" id="1.20.58.1610">
    <property type="entry name" value="NADH:ubiquinone/plastoquinone oxidoreductase, chain 3"/>
    <property type="match status" value="1"/>
</dbReference>
<dbReference type="HAMAP" id="MF_01394">
    <property type="entry name" value="NDH1_NuoA"/>
    <property type="match status" value="1"/>
</dbReference>
<dbReference type="InterPro" id="IPR023043">
    <property type="entry name" value="NAD(P)H_OxRDtase_bac/plastid"/>
</dbReference>
<dbReference type="InterPro" id="IPR000440">
    <property type="entry name" value="NADH_UbQ/plastoQ_OxRdtase_su3"/>
</dbReference>
<dbReference type="InterPro" id="IPR038430">
    <property type="entry name" value="NDAH_ubi_oxred_su3_sf"/>
</dbReference>
<dbReference type="PANTHER" id="PTHR11058">
    <property type="entry name" value="NADH-UBIQUINONE OXIDOREDUCTASE CHAIN 3"/>
    <property type="match status" value="1"/>
</dbReference>
<dbReference type="PANTHER" id="PTHR11058:SF9">
    <property type="entry name" value="NADH-UBIQUINONE OXIDOREDUCTASE CHAIN 3"/>
    <property type="match status" value="1"/>
</dbReference>
<dbReference type="Pfam" id="PF00507">
    <property type="entry name" value="Oxidored_q4"/>
    <property type="match status" value="1"/>
</dbReference>